<feature type="chain" id="PRO_0000253986" description="Guanine nucleotide-binding protein G(s) subunit alpha isoforms XLas">
    <location>
        <begin position="1"/>
        <end position="1144"/>
    </location>
</feature>
<feature type="domain" description="G-alpha" evidence="6">
    <location>
        <begin position="789"/>
        <end position="1144"/>
    </location>
</feature>
<feature type="region of interest" description="Disordered" evidence="7">
    <location>
        <begin position="1"/>
        <end position="186"/>
    </location>
</feature>
<feature type="region of interest" description="Disordered" evidence="7">
    <location>
        <begin position="316"/>
        <end position="558"/>
    </location>
</feature>
<feature type="region of interest" description="Disordered" evidence="7">
    <location>
        <begin position="622"/>
        <end position="657"/>
    </location>
</feature>
<feature type="region of interest" description="Disordered" evidence="7">
    <location>
        <begin position="735"/>
        <end position="772"/>
    </location>
</feature>
<feature type="region of interest" description="G1 motif" evidence="6">
    <location>
        <begin position="792"/>
        <end position="805"/>
    </location>
</feature>
<feature type="region of interest" description="Disordered" evidence="7">
    <location>
        <begin position="818"/>
        <end position="840"/>
    </location>
</feature>
<feature type="region of interest" description="G2 motif" evidence="6">
    <location>
        <begin position="946"/>
        <end position="954"/>
    </location>
</feature>
<feature type="region of interest" description="G3 motif" evidence="6">
    <location>
        <begin position="969"/>
        <end position="978"/>
    </location>
</feature>
<feature type="region of interest" description="G4 motif" evidence="6">
    <location>
        <begin position="1038"/>
        <end position="1045"/>
    </location>
</feature>
<feature type="region of interest" description="G5 motif" evidence="6">
    <location>
        <begin position="1114"/>
        <end position="1119"/>
    </location>
</feature>
<feature type="coiled-coil region" evidence="5">
    <location>
        <begin position="745"/>
        <end position="772"/>
    </location>
</feature>
<feature type="coiled-coil region" evidence="5">
    <location>
        <begin position="837"/>
        <end position="863"/>
    </location>
</feature>
<feature type="compositionally biased region" description="Low complexity" evidence="7">
    <location>
        <begin position="31"/>
        <end position="46"/>
    </location>
</feature>
<feature type="compositionally biased region" description="Basic and acidic residues" evidence="7">
    <location>
        <begin position="343"/>
        <end position="356"/>
    </location>
</feature>
<feature type="compositionally biased region" description="Polar residues" evidence="7">
    <location>
        <begin position="358"/>
        <end position="369"/>
    </location>
</feature>
<feature type="compositionally biased region" description="Basic and acidic residues" evidence="7">
    <location>
        <begin position="370"/>
        <end position="381"/>
    </location>
</feature>
<feature type="compositionally biased region" description="Low complexity" evidence="7">
    <location>
        <begin position="467"/>
        <end position="499"/>
    </location>
</feature>
<feature type="compositionally biased region" description="Low complexity" evidence="7">
    <location>
        <begin position="518"/>
        <end position="558"/>
    </location>
</feature>
<feature type="compositionally biased region" description="Pro residues" evidence="7">
    <location>
        <begin position="644"/>
        <end position="654"/>
    </location>
</feature>
<feature type="compositionally biased region" description="Basic and acidic residues" evidence="7">
    <location>
        <begin position="743"/>
        <end position="767"/>
    </location>
</feature>
<feature type="binding site" evidence="2">
    <location>
        <begin position="797"/>
        <end position="805"/>
    </location>
    <ligand>
        <name>GTP</name>
        <dbReference type="ChEBI" id="CHEBI:37565"/>
    </ligand>
</feature>
<feature type="binding site" evidence="2">
    <location>
        <position position="804"/>
    </location>
    <ligand>
        <name>Mg(2+)</name>
        <dbReference type="ChEBI" id="CHEBI:18420"/>
    </ligand>
</feature>
<feature type="binding site" evidence="2">
    <location>
        <begin position="947"/>
        <end position="954"/>
    </location>
    <ligand>
        <name>GTP</name>
        <dbReference type="ChEBI" id="CHEBI:37565"/>
    </ligand>
</feature>
<feature type="binding site" evidence="2">
    <location>
        <position position="954"/>
    </location>
    <ligand>
        <name>Mg(2+)</name>
        <dbReference type="ChEBI" id="CHEBI:18420"/>
    </ligand>
</feature>
<feature type="binding site" evidence="3">
    <location>
        <begin position="973"/>
        <end position="977"/>
    </location>
    <ligand>
        <name>GTP</name>
        <dbReference type="ChEBI" id="CHEBI:37565"/>
    </ligand>
</feature>
<feature type="binding site" evidence="3">
    <location>
        <begin position="1042"/>
        <end position="1045"/>
    </location>
    <ligand>
        <name>GTP</name>
        <dbReference type="ChEBI" id="CHEBI:37565"/>
    </ligand>
</feature>
<feature type="binding site" evidence="2">
    <location>
        <position position="1116"/>
    </location>
    <ligand>
        <name>GTP</name>
        <dbReference type="ChEBI" id="CHEBI:37565"/>
    </ligand>
</feature>
<feature type="modified residue" description="ADP-ribosylarginine; by cholera toxin" evidence="1">
    <location>
        <position position="951"/>
    </location>
</feature>
<feature type="modified residue" description="Phosphoserine" evidence="16">
    <location>
        <position position="1102"/>
    </location>
</feature>
<feature type="mutagenesis site" description="Large increase in adenylyl cyclase activity." evidence="9">
    <original>Q</original>
    <variation>L</variation>
    <location>
        <position position="977"/>
    </location>
</feature>
<organism>
    <name type="scientific">Rattus norvegicus</name>
    <name type="common">Rat</name>
    <dbReference type="NCBI Taxonomy" id="10116"/>
    <lineage>
        <taxon>Eukaryota</taxon>
        <taxon>Metazoa</taxon>
        <taxon>Chordata</taxon>
        <taxon>Craniata</taxon>
        <taxon>Vertebrata</taxon>
        <taxon>Euteleostomi</taxon>
        <taxon>Mammalia</taxon>
        <taxon>Eutheria</taxon>
        <taxon>Euarchontoglires</taxon>
        <taxon>Glires</taxon>
        <taxon>Rodentia</taxon>
        <taxon>Myomorpha</taxon>
        <taxon>Muroidea</taxon>
        <taxon>Muridae</taxon>
        <taxon>Murinae</taxon>
        <taxon>Rattus</taxon>
    </lineage>
</organism>
<gene>
    <name evidence="15" type="primary">Gnas</name>
    <name evidence="15" type="synonym">Gnas1</name>
</gene>
<sequence>MGMLNCLHGNNMSGQHDIPPEVGDQPEQEPLEAQGAAAPGAGVGPAEEMETEPSNNEPIPDETDSEVCGPPEDSKSDIQSPSQAFEEVQVGGDYSPPPEEAMPFEIQQPSLGDFWPTLEQPGPSGTPSGIKAFNPAILEPGTPTGAHPGLGAYSPPPEEAMPFEFNEPAQEDRCQPPLQVPDLAPGGPEAWVSRALPAEPGNLGFENTGFREDYSPPPEESVPFQLDGEEFGGDSPPPGLPRVTPQIGIGGEFPTVAVPSTLCLAPAANAPPLWVQGAIGRPFREAVRSPNFAYDISPMEITRPLLEIGRASTGVDDDTAVNMDSPPIASDGPPIEVSGAPVKSEHAKRPPLERQAAETGNSPISSTTAEEAKVPSLERGEGSPTQPETVHIKPAPVAESGTDSSKADPDSATHAVLQIGPEEVGGVPTMPTDLPPASEDAGPDVRAEPDGGTAPATPAESEDNREPAAAAAAEPAAEPAAEPAAEPAAEPAAEPAAEAVPDTEAESASGAVPDTQEEPAAAAASATPAEPAARAAPVTPTEPATRAVPSARAHPAAGAVPGASAMSAAARAAAARAAYAGPLVWGARSLSATPAARASLPARAAAAARAASAARAVAAGRSASAAPSRAHLRPPSPEIQVADPPTPRPAPRPSAWPDKYERGRSCCRYEAASGICEIESSSDESEEGATGCFQWLLRRNRRPGQPRSHTVGSNPVRNFFARAFGSCFGLSECTRSRSLSPGKAKDPMEERRKQMRKEAMEMREQKRADKKRSKLIDKQLEEEKMDYMCTHRLLLLGAGESGKSTIVKQMRILHVNGFNGEGGEEDPQAARSNSDGEKATKVQDIKNNLKEAIETIVAAMSNLVPPVELANPENQFRVDYILSVMNVPNFDFPPEFYEHAKALWEDEGVRACYERSNEYQLIDCAQYFLDKIDVIKQADYVPSDQDLPRCRVLTSGIFETKFQVDKVNFHMFDVGGQRDERRKWIQCFNDVTAIIFVVASSSYNMVIREDNQTNRLQEALNLFKSIWNNRWLRTISVILFLNKQDLLAEKVLAGKSKIEDYFPEFARYTTPEDATPEPGEDPRVTRAKYFIRDEFLRISTASGDGRHYCYPHFTCAVDTENIRRVFNDCRDIIQRMHLRQYELL</sequence>
<dbReference type="EMBL" id="AABR03134399">
    <property type="status" value="NOT_ANNOTATED_CDS"/>
    <property type="molecule type" value="Genomic_DNA"/>
</dbReference>
<dbReference type="EMBL" id="AABR03134465">
    <property type="status" value="NOT_ANNOTATED_CDS"/>
    <property type="molecule type" value="Genomic_DNA"/>
</dbReference>
<dbReference type="EMBL" id="X84047">
    <property type="protein sequence ID" value="CAC39211.1"/>
    <property type="status" value="ALT_INIT"/>
    <property type="molecule type" value="mRNA"/>
</dbReference>
<dbReference type="SMR" id="Q63803"/>
<dbReference type="FunCoup" id="Q63803">
    <property type="interactions" value="405"/>
</dbReference>
<dbReference type="IntAct" id="Q63803">
    <property type="interactions" value="1"/>
</dbReference>
<dbReference type="STRING" id="10116.ENSRNOP00000069800"/>
<dbReference type="GlyGen" id="Q63803">
    <property type="glycosylation" value="6 sites"/>
</dbReference>
<dbReference type="iPTMnet" id="Q63803"/>
<dbReference type="SwissPalm" id="Q63803"/>
<dbReference type="jPOST" id="Q63803"/>
<dbReference type="PaxDb" id="10116-ENSRNOP00000066164"/>
<dbReference type="ABCD" id="Q63803">
    <property type="antibodies" value="1 sequenced antibody"/>
</dbReference>
<dbReference type="AGR" id="RGD:2716"/>
<dbReference type="RGD" id="2716">
    <property type="gene designation" value="Gnas"/>
</dbReference>
<dbReference type="eggNOG" id="KOG0099">
    <property type="taxonomic scope" value="Eukaryota"/>
</dbReference>
<dbReference type="InParanoid" id="Q63803"/>
<dbReference type="Reactome" id="R-RNO-381676">
    <property type="pathway name" value="Glucagon-like Peptide-1 (GLP1) regulates insulin secretion"/>
</dbReference>
<dbReference type="Reactome" id="R-RNO-420092">
    <property type="pathway name" value="Glucagon-type ligand receptors"/>
</dbReference>
<dbReference type="Reactome" id="R-RNO-432040">
    <property type="pathway name" value="Vasopressin regulates renal water homeostasis via Aquaporins"/>
</dbReference>
<dbReference type="Reactome" id="R-RNO-9856530">
    <property type="pathway name" value="High laminar flow shear stress activates signaling by PIEZO1 and PECAM1:CDH5:KDR in endothelial cells"/>
</dbReference>
<dbReference type="Proteomes" id="UP000002494">
    <property type="component" value="Unplaced"/>
</dbReference>
<dbReference type="GO" id="GO:0016324">
    <property type="term" value="C:apical plasma membrane"/>
    <property type="evidence" value="ECO:0007669"/>
    <property type="project" value="UniProtKB-SubCell"/>
</dbReference>
<dbReference type="GO" id="GO:0030142">
    <property type="term" value="C:COPI-coated Golgi to ER transport vesicle"/>
    <property type="evidence" value="ECO:0000314"/>
    <property type="project" value="RGD"/>
</dbReference>
<dbReference type="GO" id="GO:0005737">
    <property type="term" value="C:cytoplasm"/>
    <property type="evidence" value="ECO:0000266"/>
    <property type="project" value="RGD"/>
</dbReference>
<dbReference type="GO" id="GO:0005829">
    <property type="term" value="C:cytosol"/>
    <property type="evidence" value="ECO:0000266"/>
    <property type="project" value="RGD"/>
</dbReference>
<dbReference type="GO" id="GO:0030425">
    <property type="term" value="C:dendrite"/>
    <property type="evidence" value="ECO:0000266"/>
    <property type="project" value="RGD"/>
</dbReference>
<dbReference type="GO" id="GO:0005768">
    <property type="term" value="C:endosome"/>
    <property type="evidence" value="ECO:0000314"/>
    <property type="project" value="RGD"/>
</dbReference>
<dbReference type="GO" id="GO:0005834">
    <property type="term" value="C:heterotrimeric G-protein complex"/>
    <property type="evidence" value="ECO:0000314"/>
    <property type="project" value="RGD"/>
</dbReference>
<dbReference type="GO" id="GO:0016020">
    <property type="term" value="C:membrane"/>
    <property type="evidence" value="ECO:0000266"/>
    <property type="project" value="RGD"/>
</dbReference>
<dbReference type="GO" id="GO:0043025">
    <property type="term" value="C:neuronal cell body"/>
    <property type="evidence" value="ECO:0000314"/>
    <property type="project" value="RGD"/>
</dbReference>
<dbReference type="GO" id="GO:0005634">
    <property type="term" value="C:nucleus"/>
    <property type="evidence" value="ECO:0000266"/>
    <property type="project" value="RGD"/>
</dbReference>
<dbReference type="GO" id="GO:0048471">
    <property type="term" value="C:perinuclear region of cytoplasm"/>
    <property type="evidence" value="ECO:0000314"/>
    <property type="project" value="RGD"/>
</dbReference>
<dbReference type="GO" id="GO:0005886">
    <property type="term" value="C:plasma membrane"/>
    <property type="evidence" value="ECO:0000266"/>
    <property type="project" value="RGD"/>
</dbReference>
<dbReference type="GO" id="GO:0055037">
    <property type="term" value="C:recycling endosome"/>
    <property type="evidence" value="ECO:0000314"/>
    <property type="project" value="RGD"/>
</dbReference>
<dbReference type="GO" id="GO:0001726">
    <property type="term" value="C:ruffle"/>
    <property type="evidence" value="ECO:0000314"/>
    <property type="project" value="RGD"/>
</dbReference>
<dbReference type="GO" id="GO:0042383">
    <property type="term" value="C:sarcolemma"/>
    <property type="evidence" value="ECO:0000314"/>
    <property type="project" value="RGD"/>
</dbReference>
<dbReference type="GO" id="GO:0032588">
    <property type="term" value="C:trans-Golgi network membrane"/>
    <property type="evidence" value="ECO:0000266"/>
    <property type="project" value="RGD"/>
</dbReference>
<dbReference type="GO" id="GO:0010856">
    <property type="term" value="F:adenylate cyclase activator activity"/>
    <property type="evidence" value="ECO:0000314"/>
    <property type="project" value="UniProtKB"/>
</dbReference>
<dbReference type="GO" id="GO:0010854">
    <property type="term" value="F:adenylate cyclase regulator activity"/>
    <property type="evidence" value="ECO:0000266"/>
    <property type="project" value="RGD"/>
</dbReference>
<dbReference type="GO" id="GO:0043014">
    <property type="term" value="F:alpha-tubulin binding"/>
    <property type="evidence" value="ECO:0000314"/>
    <property type="project" value="RGD"/>
</dbReference>
<dbReference type="GO" id="GO:0031698">
    <property type="term" value="F:beta-2 adrenergic receptor binding"/>
    <property type="evidence" value="ECO:0000353"/>
    <property type="project" value="RGD"/>
</dbReference>
<dbReference type="GO" id="GO:0051430">
    <property type="term" value="F:corticotropin-releasing hormone receptor 1 binding"/>
    <property type="evidence" value="ECO:0000353"/>
    <property type="project" value="RGD"/>
</dbReference>
<dbReference type="GO" id="GO:0031748">
    <property type="term" value="F:D1 dopamine receptor binding"/>
    <property type="evidence" value="ECO:0000353"/>
    <property type="project" value="RGD"/>
</dbReference>
<dbReference type="GO" id="GO:0003925">
    <property type="term" value="F:G protein activity"/>
    <property type="evidence" value="ECO:0000266"/>
    <property type="project" value="RGD"/>
</dbReference>
<dbReference type="GO" id="GO:0001965">
    <property type="term" value="F:G-protein alpha-subunit binding"/>
    <property type="evidence" value="ECO:0000353"/>
    <property type="project" value="RGD"/>
</dbReference>
<dbReference type="GO" id="GO:0031681">
    <property type="term" value="F:G-protein beta-subunit binding"/>
    <property type="evidence" value="ECO:0000314"/>
    <property type="project" value="RGD"/>
</dbReference>
<dbReference type="GO" id="GO:0031683">
    <property type="term" value="F:G-protein beta/gamma-subunit complex binding"/>
    <property type="evidence" value="ECO:0000318"/>
    <property type="project" value="GO_Central"/>
</dbReference>
<dbReference type="GO" id="GO:0005525">
    <property type="term" value="F:GTP binding"/>
    <property type="evidence" value="ECO:0000314"/>
    <property type="project" value="RGD"/>
</dbReference>
<dbReference type="GO" id="GO:0003924">
    <property type="term" value="F:GTPase activity"/>
    <property type="evidence" value="ECO:0000318"/>
    <property type="project" value="GO_Central"/>
</dbReference>
<dbReference type="GO" id="GO:0005159">
    <property type="term" value="F:insulin-like growth factor receptor binding"/>
    <property type="evidence" value="ECO:0000353"/>
    <property type="project" value="RGD"/>
</dbReference>
<dbReference type="GO" id="GO:0035255">
    <property type="term" value="F:ionotropic glutamate receptor binding"/>
    <property type="evidence" value="ECO:0000353"/>
    <property type="project" value="RGD"/>
</dbReference>
<dbReference type="GO" id="GO:0046872">
    <property type="term" value="F:metal ion binding"/>
    <property type="evidence" value="ECO:0007669"/>
    <property type="project" value="UniProtKB-KW"/>
</dbReference>
<dbReference type="GO" id="GO:0031852">
    <property type="term" value="F:mu-type opioid receptor binding"/>
    <property type="evidence" value="ECO:0000314"/>
    <property type="project" value="RGD"/>
</dbReference>
<dbReference type="GO" id="GO:0019904">
    <property type="term" value="F:protein domain specific binding"/>
    <property type="evidence" value="ECO:0000353"/>
    <property type="project" value="RGD"/>
</dbReference>
<dbReference type="GO" id="GO:0071880">
    <property type="term" value="P:adenylate cyclase-activating adrenergic receptor signaling pathway"/>
    <property type="evidence" value="ECO:0000266"/>
    <property type="project" value="RGD"/>
</dbReference>
<dbReference type="GO" id="GO:0007191">
    <property type="term" value="P:adenylate cyclase-activating dopamine receptor signaling pathway"/>
    <property type="evidence" value="ECO:0000266"/>
    <property type="project" value="RGD"/>
</dbReference>
<dbReference type="GO" id="GO:0007189">
    <property type="term" value="P:adenylate cyclase-activating G protein-coupled receptor signaling pathway"/>
    <property type="evidence" value="ECO:0000314"/>
    <property type="project" value="RGD"/>
</dbReference>
<dbReference type="GO" id="GO:0007192">
    <property type="term" value="P:adenylate cyclase-activating serotonin receptor signaling pathway"/>
    <property type="evidence" value="ECO:0000266"/>
    <property type="project" value="RGD"/>
</dbReference>
<dbReference type="GO" id="GO:0060348">
    <property type="term" value="P:bone development"/>
    <property type="evidence" value="ECO:0000266"/>
    <property type="project" value="RGD"/>
</dbReference>
<dbReference type="GO" id="GO:0051216">
    <property type="term" value="P:cartilage development"/>
    <property type="evidence" value="ECO:0000266"/>
    <property type="project" value="RGD"/>
</dbReference>
<dbReference type="GO" id="GO:0071377">
    <property type="term" value="P:cellular response to glucagon stimulus"/>
    <property type="evidence" value="ECO:0000266"/>
    <property type="project" value="RGD"/>
</dbReference>
<dbReference type="GO" id="GO:0050890">
    <property type="term" value="P:cognition"/>
    <property type="evidence" value="ECO:0000266"/>
    <property type="project" value="RGD"/>
</dbReference>
<dbReference type="GO" id="GO:0048589">
    <property type="term" value="P:developmental growth"/>
    <property type="evidence" value="ECO:0000266"/>
    <property type="project" value="RGD"/>
</dbReference>
<dbReference type="GO" id="GO:0048701">
    <property type="term" value="P:embryonic cranial skeleton morphogenesis"/>
    <property type="evidence" value="ECO:0000266"/>
    <property type="project" value="RGD"/>
</dbReference>
<dbReference type="GO" id="GO:0035116">
    <property type="term" value="P:embryonic hindlimb morphogenesis"/>
    <property type="evidence" value="ECO:0000266"/>
    <property type="project" value="RGD"/>
</dbReference>
<dbReference type="GO" id="GO:0001958">
    <property type="term" value="P:endochondral ossification"/>
    <property type="evidence" value="ECO:0000266"/>
    <property type="project" value="RGD"/>
</dbReference>
<dbReference type="GO" id="GO:0006112">
    <property type="term" value="P:energy reserve metabolic process"/>
    <property type="evidence" value="ECO:0000266"/>
    <property type="project" value="RGD"/>
</dbReference>
<dbReference type="GO" id="GO:0007186">
    <property type="term" value="P:G protein-coupled receptor signaling pathway"/>
    <property type="evidence" value="ECO:0000315"/>
    <property type="project" value="RGD"/>
</dbReference>
<dbReference type="GO" id="GO:0071514">
    <property type="term" value="P:genomic imprinting"/>
    <property type="evidence" value="ECO:0000266"/>
    <property type="project" value="RGD"/>
</dbReference>
<dbReference type="GO" id="GO:0060789">
    <property type="term" value="P:hair follicle placode formation"/>
    <property type="evidence" value="ECO:0000266"/>
    <property type="project" value="RGD"/>
</dbReference>
<dbReference type="GO" id="GO:0035264">
    <property type="term" value="P:multicellular organism growth"/>
    <property type="evidence" value="ECO:0000266"/>
    <property type="project" value="RGD"/>
</dbReference>
<dbReference type="GO" id="GO:0045776">
    <property type="term" value="P:negative regulation of blood pressure"/>
    <property type="evidence" value="ECO:0000315"/>
    <property type="project" value="RGD"/>
</dbReference>
<dbReference type="GO" id="GO:0070527">
    <property type="term" value="P:platelet aggregation"/>
    <property type="evidence" value="ECO:0000266"/>
    <property type="project" value="RGD"/>
</dbReference>
<dbReference type="GO" id="GO:0008284">
    <property type="term" value="P:positive regulation of cell population proliferation"/>
    <property type="evidence" value="ECO:0000314"/>
    <property type="project" value="RGD"/>
</dbReference>
<dbReference type="GO" id="GO:0120162">
    <property type="term" value="P:positive regulation of cold-induced thermogenesis"/>
    <property type="evidence" value="ECO:0000250"/>
    <property type="project" value="YuBioLab"/>
</dbReference>
<dbReference type="GO" id="GO:0032024">
    <property type="term" value="P:positive regulation of insulin secretion"/>
    <property type="evidence" value="ECO:0000266"/>
    <property type="project" value="RGD"/>
</dbReference>
<dbReference type="GO" id="GO:0045669">
    <property type="term" value="P:positive regulation of osteoblast differentiation"/>
    <property type="evidence" value="ECO:0000266"/>
    <property type="project" value="RGD"/>
</dbReference>
<dbReference type="GO" id="GO:0045672">
    <property type="term" value="P:positive regulation of osteoclast differentiation"/>
    <property type="evidence" value="ECO:0000266"/>
    <property type="project" value="RGD"/>
</dbReference>
<dbReference type="GO" id="GO:0010765">
    <property type="term" value="P:positive regulation of sodium ion transport"/>
    <property type="evidence" value="ECO:0000315"/>
    <property type="project" value="RGD"/>
</dbReference>
<dbReference type="GO" id="GO:0040032">
    <property type="term" value="P:post-embryonic body morphogenesis"/>
    <property type="evidence" value="ECO:0000266"/>
    <property type="project" value="RGD"/>
</dbReference>
<dbReference type="GO" id="GO:0009791">
    <property type="term" value="P:post-embryonic development"/>
    <property type="evidence" value="ECO:0000266"/>
    <property type="project" value="RGD"/>
</dbReference>
<dbReference type="GO" id="GO:2000828">
    <property type="term" value="P:regulation of parathyroid hormone secretion"/>
    <property type="evidence" value="ECO:0000266"/>
    <property type="project" value="RGD"/>
</dbReference>
<dbReference type="GO" id="GO:0009966">
    <property type="term" value="P:regulation of signal transduction"/>
    <property type="evidence" value="ECO:0000266"/>
    <property type="project" value="RGD"/>
</dbReference>
<dbReference type="GO" id="GO:0006357">
    <property type="term" value="P:regulation of transcription by RNA polymerase II"/>
    <property type="evidence" value="ECO:0000315"/>
    <property type="project" value="RGD"/>
</dbReference>
<dbReference type="GO" id="GO:0071107">
    <property type="term" value="P:response to parathyroid hormone"/>
    <property type="evidence" value="ECO:0000266"/>
    <property type="project" value="RGD"/>
</dbReference>
<dbReference type="GO" id="GO:0034695">
    <property type="term" value="P:response to prostaglandin E"/>
    <property type="evidence" value="ECO:0000266"/>
    <property type="project" value="RGD"/>
</dbReference>
<dbReference type="GO" id="GO:0009410">
    <property type="term" value="P:response to xenobiotic stimulus"/>
    <property type="evidence" value="ECO:0000266"/>
    <property type="project" value="RGD"/>
</dbReference>
<dbReference type="GO" id="GO:0007606">
    <property type="term" value="P:sensory perception of chemical stimulus"/>
    <property type="evidence" value="ECO:0000318"/>
    <property type="project" value="GO_Central"/>
</dbReference>
<dbReference type="GO" id="GO:0001501">
    <property type="term" value="P:skeletal system development"/>
    <property type="evidence" value="ECO:0000266"/>
    <property type="project" value="RGD"/>
</dbReference>
<dbReference type="GO" id="GO:0043588">
    <property type="term" value="P:skin development"/>
    <property type="evidence" value="ECO:0000266"/>
    <property type="project" value="RGD"/>
</dbReference>
<dbReference type="GO" id="GO:0001894">
    <property type="term" value="P:tissue homeostasis"/>
    <property type="evidence" value="ECO:0000266"/>
    <property type="project" value="RGD"/>
</dbReference>
<dbReference type="CDD" id="cd00066">
    <property type="entry name" value="G-alpha"/>
    <property type="match status" value="1"/>
</dbReference>
<dbReference type="CDD" id="cd22249">
    <property type="entry name" value="UDM1_RNF168_RNF169-like"/>
    <property type="match status" value="1"/>
</dbReference>
<dbReference type="FunFam" id="1.10.400.10:FF:000003">
    <property type="entry name" value="Guanine nucleotide-binding protein G(S) subunit alpha"/>
    <property type="match status" value="1"/>
</dbReference>
<dbReference type="FunFam" id="3.40.50.300:FF:006178">
    <property type="entry name" value="Guanine nucleotide-binding protein G(s) subunit alpha isoforms short"/>
    <property type="match status" value="2"/>
</dbReference>
<dbReference type="Gene3D" id="1.10.400.10">
    <property type="entry name" value="GI Alpha 1, domain 2-like"/>
    <property type="match status" value="1"/>
</dbReference>
<dbReference type="Gene3D" id="3.40.50.300">
    <property type="entry name" value="P-loop containing nucleotide triphosphate hydrolases"/>
    <property type="match status" value="1"/>
</dbReference>
<dbReference type="InterPro" id="IPR000367">
    <property type="entry name" value="Gprotein_alpha_S"/>
</dbReference>
<dbReference type="InterPro" id="IPR001019">
    <property type="entry name" value="Gprotein_alpha_su"/>
</dbReference>
<dbReference type="InterPro" id="IPR011025">
    <property type="entry name" value="GproteinA_insert"/>
</dbReference>
<dbReference type="InterPro" id="IPR027417">
    <property type="entry name" value="P-loop_NTPase"/>
</dbReference>
<dbReference type="PANTHER" id="PTHR10218">
    <property type="entry name" value="GTP-BINDING PROTEIN ALPHA SUBUNIT"/>
    <property type="match status" value="1"/>
</dbReference>
<dbReference type="PANTHER" id="PTHR10218:SF348">
    <property type="entry name" value="GUANINE NUCLEOTIDE-BINDING PROTEIN G(S) SUBUNIT ALPHA ISOFORMS XLAS"/>
    <property type="match status" value="1"/>
</dbReference>
<dbReference type="Pfam" id="PF00503">
    <property type="entry name" value="G-alpha"/>
    <property type="match status" value="1"/>
</dbReference>
<dbReference type="PRINTS" id="PR00318">
    <property type="entry name" value="GPROTEINA"/>
</dbReference>
<dbReference type="PRINTS" id="PR00443">
    <property type="entry name" value="GPROTEINAS"/>
</dbReference>
<dbReference type="SMART" id="SM00275">
    <property type="entry name" value="G_alpha"/>
    <property type="match status" value="1"/>
</dbReference>
<dbReference type="SUPFAM" id="SSF52540">
    <property type="entry name" value="P-loop containing nucleoside triphosphate hydrolases"/>
    <property type="match status" value="1"/>
</dbReference>
<dbReference type="SUPFAM" id="SSF47895">
    <property type="entry name" value="Transducin (alpha subunit), insertion domain"/>
    <property type="match status" value="1"/>
</dbReference>
<dbReference type="PROSITE" id="PS51882">
    <property type="entry name" value="G_ALPHA"/>
    <property type="match status" value="1"/>
</dbReference>
<name>GNAS1_RAT</name>
<comment type="function">
    <text evidence="9">Guanine nucleotide-binding proteins (G proteins) function as transducers in numerous signaling pathways controlled by G protein-coupled receptors (GPCRs). Signaling involves the activation of adenylyl cyclases, resulting in increased levels of the signaling molecule cAMP. GNAS functions downstream of several GPCRs, including beta-adrenergic receptors. XLas isoforms interact with the same set of receptors as Gnas isoforms.</text>
</comment>
<comment type="subunit">
    <text evidence="4 9 10">G proteins are composed of 3 units; alpha, beta and gamma. The alpha chain contains the guanine nucleotide binding site. Interacts through its N-terminal region with ALEX which is produced from the same locus in a different open reading frame. This interaction may inhibit its adenylyl cyclase-stimulating activity. Interacts with MAGED2.</text>
</comment>
<comment type="subcellular location">
    <subcellularLocation>
        <location evidence="8">Cell membrane</location>
        <topology evidence="8">Peripheral membrane protein</topology>
    </subcellularLocation>
    <subcellularLocation>
        <location evidence="4">Apical cell membrane</location>
    </subcellularLocation>
</comment>
<comment type="alternative products">
    <event type="alternative splicing"/>
    <isoform>
        <id>Q63803-1</id>
        <name>XLas-1</name>
        <sequence type="displayed"/>
    </isoform>
    <isoform>
        <id>P63095-1</id>
        <name evidence="13">Gnas-1</name>
        <sequence type="external"/>
    </isoform>
    <isoform>
        <id>P63095-2</id>
        <name evidence="13">Gnas-2</name>
        <sequence type="external"/>
    </isoform>
    <isoform>
        <id>P63095-3</id>
        <name evidence="13">Gnas-3</name>
        <name evidence="13">GsaN1</name>
        <sequence type="external"/>
    </isoform>
    <isoform>
        <id>Q792G6-1</id>
        <name evidence="13">Nesp55</name>
        <sequence type="external"/>
    </isoform>
</comment>
<comment type="tissue specificity">
    <text evidence="8 12">Enriched in neuroendocrine tissues with a particularly high level of expression in pituitary where it is abundant in intermediate and anterior lobes. In adrenal gland, found in central region containing medullary chromaffin cells but not in cortex. In cerebellum, strongly expressed in perikarya of Purkinje cells. Not detected in liver, kidney or neurohypophysis.</text>
</comment>
<comment type="miscellaneous">
    <text evidence="10">This protein is produced by a bicistronic gene which also produces the ALEX protein from an overlapping reading frame.</text>
</comment>
<comment type="miscellaneous">
    <text>The GNAS locus is imprinted in a complex manner, giving rise to distinct paternally, maternally and biallelically expressed proteins. The XLas isoforms are paternally derived, the Gnas isoforms are biallelically derived and the Nesp55 isoforms are maternally derived.</text>
</comment>
<comment type="similarity">
    <text evidence="5">Belongs to the G-alpha family. G(s) subfamily.</text>
</comment>
<comment type="sequence caution" evidence="13">
    <conflict type="erroneous initiation">
        <sequence resource="EMBL-CDS" id="CAC39211"/>
    </conflict>
</comment>
<proteinExistence type="evidence at protein level"/>
<keyword id="KW-0013">ADP-ribosylation</keyword>
<keyword id="KW-0025">Alternative splicing</keyword>
<keyword id="KW-1003">Cell membrane</keyword>
<keyword id="KW-0175">Coiled coil</keyword>
<keyword id="KW-0342">GTP-binding</keyword>
<keyword id="KW-0460">Magnesium</keyword>
<keyword id="KW-0472">Membrane</keyword>
<keyword id="KW-0479">Metal-binding</keyword>
<keyword id="KW-0547">Nucleotide-binding</keyword>
<keyword id="KW-0597">Phosphoprotein</keyword>
<keyword id="KW-1185">Reference proteome</keyword>
<keyword id="KW-0807">Transducer</keyword>
<protein>
    <recommendedName>
        <fullName>Guanine nucleotide-binding protein G(s) subunit alpha isoforms XLas</fullName>
    </recommendedName>
    <alternativeName>
        <fullName>Adenylate cyclase-stimulating G alpha protein</fullName>
    </alternativeName>
    <alternativeName>
        <fullName>Extra large alphas protein</fullName>
        <shortName>XLalphas</shortName>
    </alternativeName>
    <alternativeName>
        <fullName>G-alpha-8</fullName>
    </alternativeName>
</protein>
<evidence type="ECO:0000250" key="1"/>
<evidence type="ECO:0000250" key="2">
    <source>
        <dbReference type="UniProtKB" id="P04896"/>
    </source>
</evidence>
<evidence type="ECO:0000250" key="3">
    <source>
        <dbReference type="UniProtKB" id="P63096"/>
    </source>
</evidence>
<evidence type="ECO:0000250" key="4">
    <source>
        <dbReference type="UniProtKB" id="Q5JWF2"/>
    </source>
</evidence>
<evidence type="ECO:0000255" key="5"/>
<evidence type="ECO:0000255" key="6">
    <source>
        <dbReference type="PROSITE-ProRule" id="PRU01230"/>
    </source>
</evidence>
<evidence type="ECO:0000256" key="7">
    <source>
        <dbReference type="SAM" id="MobiDB-lite"/>
    </source>
</evidence>
<evidence type="ECO:0000269" key="8">
    <source>
    </source>
</evidence>
<evidence type="ECO:0000269" key="9">
    <source>
    </source>
</evidence>
<evidence type="ECO:0000269" key="10">
    <source>
    </source>
</evidence>
<evidence type="ECO:0000269" key="11">
    <source>
    </source>
</evidence>
<evidence type="ECO:0000269" key="12">
    <source>
    </source>
</evidence>
<evidence type="ECO:0000305" key="13"/>
<evidence type="ECO:0000312" key="14">
    <source>
        <dbReference type="EMBL" id="CAC39211.1"/>
    </source>
</evidence>
<evidence type="ECO:0000312" key="15">
    <source>
        <dbReference type="RGD" id="2716"/>
    </source>
</evidence>
<evidence type="ECO:0007744" key="16">
    <source>
    </source>
</evidence>
<accession>Q63803</accession>
<reference evidence="13" key="1">
    <citation type="journal article" date="2004" name="Nature">
        <title>Genome sequence of the Brown Norway rat yields insights into mammalian evolution.</title>
        <authorList>
            <person name="Gibbs R.A."/>
            <person name="Weinstock G.M."/>
            <person name="Metzker M.L."/>
            <person name="Muzny D.M."/>
            <person name="Sodergren E.J."/>
            <person name="Scherer S."/>
            <person name="Scott G."/>
            <person name="Steffen D."/>
            <person name="Worley K.C."/>
            <person name="Burch P.E."/>
            <person name="Okwuonu G."/>
            <person name="Hines S."/>
            <person name="Lewis L."/>
            <person name="Deramo C."/>
            <person name="Delgado O."/>
            <person name="Dugan-Rocha S."/>
            <person name="Miner G."/>
            <person name="Morgan M."/>
            <person name="Hawes A."/>
            <person name="Gill R."/>
            <person name="Holt R.A."/>
            <person name="Adams M.D."/>
            <person name="Amanatides P.G."/>
            <person name="Baden-Tillson H."/>
            <person name="Barnstead M."/>
            <person name="Chin S."/>
            <person name="Evans C.A."/>
            <person name="Ferriera S."/>
            <person name="Fosler C."/>
            <person name="Glodek A."/>
            <person name="Gu Z."/>
            <person name="Jennings D."/>
            <person name="Kraft C.L."/>
            <person name="Nguyen T."/>
            <person name="Pfannkoch C.M."/>
            <person name="Sitter C."/>
            <person name="Sutton G.G."/>
            <person name="Venter J.C."/>
            <person name="Woodage T."/>
            <person name="Smith D."/>
            <person name="Lee H.-M."/>
            <person name="Gustafson E."/>
            <person name="Cahill P."/>
            <person name="Kana A."/>
            <person name="Doucette-Stamm L."/>
            <person name="Weinstock K."/>
            <person name="Fechtel K."/>
            <person name="Weiss R.B."/>
            <person name="Dunn D.M."/>
            <person name="Green E.D."/>
            <person name="Blakesley R.W."/>
            <person name="Bouffard G.G."/>
            <person name="De Jong P.J."/>
            <person name="Osoegawa K."/>
            <person name="Zhu B."/>
            <person name="Marra M."/>
            <person name="Schein J."/>
            <person name="Bosdet I."/>
            <person name="Fjell C."/>
            <person name="Jones S."/>
            <person name="Krzywinski M."/>
            <person name="Mathewson C."/>
            <person name="Siddiqui A."/>
            <person name="Wye N."/>
            <person name="McPherson J."/>
            <person name="Zhao S."/>
            <person name="Fraser C.M."/>
            <person name="Shetty J."/>
            <person name="Shatsman S."/>
            <person name="Geer K."/>
            <person name="Chen Y."/>
            <person name="Abramzon S."/>
            <person name="Nierman W.C."/>
            <person name="Havlak P.H."/>
            <person name="Chen R."/>
            <person name="Durbin K.J."/>
            <person name="Egan A."/>
            <person name="Ren Y."/>
            <person name="Song X.-Z."/>
            <person name="Li B."/>
            <person name="Liu Y."/>
            <person name="Qin X."/>
            <person name="Cawley S."/>
            <person name="Cooney A.J."/>
            <person name="D'Souza L.M."/>
            <person name="Martin K."/>
            <person name="Wu J.Q."/>
            <person name="Gonzalez-Garay M.L."/>
            <person name="Jackson A.R."/>
            <person name="Kalafus K.J."/>
            <person name="McLeod M.P."/>
            <person name="Milosavljevic A."/>
            <person name="Virk D."/>
            <person name="Volkov A."/>
            <person name="Wheeler D.A."/>
            <person name="Zhang Z."/>
            <person name="Bailey J.A."/>
            <person name="Eichler E.E."/>
            <person name="Tuzun E."/>
            <person name="Birney E."/>
            <person name="Mongin E."/>
            <person name="Ureta-Vidal A."/>
            <person name="Woodwark C."/>
            <person name="Zdobnov E."/>
            <person name="Bork P."/>
            <person name="Suyama M."/>
            <person name="Torrents D."/>
            <person name="Alexandersson M."/>
            <person name="Trask B.J."/>
            <person name="Young J.M."/>
            <person name="Huang H."/>
            <person name="Wang H."/>
            <person name="Xing H."/>
            <person name="Daniels S."/>
            <person name="Gietzen D."/>
            <person name="Schmidt J."/>
            <person name="Stevens K."/>
            <person name="Vitt U."/>
            <person name="Wingrove J."/>
            <person name="Camara F."/>
            <person name="Mar Alba M."/>
            <person name="Abril J.F."/>
            <person name="Guigo R."/>
            <person name="Smit A."/>
            <person name="Dubchak I."/>
            <person name="Rubin E.M."/>
            <person name="Couronne O."/>
            <person name="Poliakov A."/>
            <person name="Huebner N."/>
            <person name="Ganten D."/>
            <person name="Goesele C."/>
            <person name="Hummel O."/>
            <person name="Kreitler T."/>
            <person name="Lee Y.-A."/>
            <person name="Monti J."/>
            <person name="Schulz H."/>
            <person name="Zimdahl H."/>
            <person name="Himmelbauer H."/>
            <person name="Lehrach H."/>
            <person name="Jacob H.J."/>
            <person name="Bromberg S."/>
            <person name="Gullings-Handley J."/>
            <person name="Jensen-Seaman M.I."/>
            <person name="Kwitek A.E."/>
            <person name="Lazar J."/>
            <person name="Pasko D."/>
            <person name="Tonellato P.J."/>
            <person name="Twigger S."/>
            <person name="Ponting C.P."/>
            <person name="Duarte J.M."/>
            <person name="Rice S."/>
            <person name="Goodstadt L."/>
            <person name="Beatson S.A."/>
            <person name="Emes R.D."/>
            <person name="Winter E.E."/>
            <person name="Webber C."/>
            <person name="Brandt P."/>
            <person name="Nyakatura G."/>
            <person name="Adetobi M."/>
            <person name="Chiaromonte F."/>
            <person name="Elnitski L."/>
            <person name="Eswara P."/>
            <person name="Hardison R.C."/>
            <person name="Hou M."/>
            <person name="Kolbe D."/>
            <person name="Makova K."/>
            <person name="Miller W."/>
            <person name="Nekrutenko A."/>
            <person name="Riemer C."/>
            <person name="Schwartz S."/>
            <person name="Taylor J."/>
            <person name="Yang S."/>
            <person name="Zhang Y."/>
            <person name="Lindpaintner K."/>
            <person name="Andrews T.D."/>
            <person name="Caccamo M."/>
            <person name="Clamp M."/>
            <person name="Clarke L."/>
            <person name="Curwen V."/>
            <person name="Durbin R.M."/>
            <person name="Eyras E."/>
            <person name="Searle S.M."/>
            <person name="Cooper G.M."/>
            <person name="Batzoglou S."/>
            <person name="Brudno M."/>
            <person name="Sidow A."/>
            <person name="Stone E.A."/>
            <person name="Payseur B.A."/>
            <person name="Bourque G."/>
            <person name="Lopez-Otin C."/>
            <person name="Puente X.S."/>
            <person name="Chakrabarti K."/>
            <person name="Chatterji S."/>
            <person name="Dewey C."/>
            <person name="Pachter L."/>
            <person name="Bray N."/>
            <person name="Yap V.B."/>
            <person name="Caspi A."/>
            <person name="Tesler G."/>
            <person name="Pevzner P.A."/>
            <person name="Haussler D."/>
            <person name="Roskin K.M."/>
            <person name="Baertsch R."/>
            <person name="Clawson H."/>
            <person name="Furey T.S."/>
            <person name="Hinrichs A.S."/>
            <person name="Karolchik D."/>
            <person name="Kent W.J."/>
            <person name="Rosenbloom K.R."/>
            <person name="Trumbower H."/>
            <person name="Weirauch M."/>
            <person name="Cooper D.N."/>
            <person name="Stenson P.D."/>
            <person name="Ma B."/>
            <person name="Brent M."/>
            <person name="Arumugam M."/>
            <person name="Shteynberg D."/>
            <person name="Copley R.R."/>
            <person name="Taylor M.S."/>
            <person name="Riethman H."/>
            <person name="Mudunuri U."/>
            <person name="Peterson J."/>
            <person name="Guyer M."/>
            <person name="Felsenfeld A."/>
            <person name="Old S."/>
            <person name="Mockrin S."/>
            <person name="Collins F.S."/>
        </authorList>
    </citation>
    <scope>NUCLEOTIDE SEQUENCE [LARGE SCALE GENOMIC DNA]</scope>
    <source>
        <strain evidence="11">Brown Norway</strain>
    </source>
</reference>
<reference evidence="13 14" key="2">
    <citation type="journal article" date="1994" name="Nature">
        <title>XLas is a new type of G protein.</title>
        <authorList>
            <person name="Kehlenbach R.H."/>
            <person name="Matthey J."/>
            <person name="Huttner W.B."/>
        </authorList>
    </citation>
    <scope>NUCLEOTIDE SEQUENCE [MRNA] OF 284-1144</scope>
    <scope>TISSUE SPECIFICITY</scope>
</reference>
<reference key="3">
    <citation type="journal article" date="1995" name="Nature">
        <authorList>
            <person name="Kehlenbach R.H."/>
            <person name="Matthey J."/>
            <person name="Huttner W.B."/>
        </authorList>
    </citation>
    <scope>ERRATUM OF PUBMED:7997272</scope>
</reference>
<reference evidence="13" key="4">
    <citation type="journal article" date="2000" name="J. Biol. Chem.">
        <title>Characterization of the extra-large G protein alpha-subunit XLalphas. I. Tissue distribution and subcellular localization.</title>
        <authorList>
            <person name="Pasolli H.A."/>
            <person name="Klemke M."/>
            <person name="Kehlenbach R.H."/>
            <person name="Wang Y."/>
            <person name="Huttner W.B."/>
        </authorList>
    </citation>
    <scope>SUBCELLULAR LOCATION</scope>
    <scope>TISSUE SPECIFICITY</scope>
</reference>
<reference evidence="13" key="5">
    <citation type="journal article" date="2000" name="J. Biol. Chem.">
        <title>Characterization of the extra-large G protein alpha-subunit XLalphas. II. Signal transduction properties.</title>
        <authorList>
            <person name="Klemke M."/>
            <person name="Pasolli H.A."/>
            <person name="Kehlenbach R.H."/>
            <person name="Offermanns S."/>
            <person name="Schultz G."/>
            <person name="Huttner W.B."/>
        </authorList>
    </citation>
    <scope>FUNCTION</scope>
    <scope>SUBUNIT</scope>
    <scope>MUTAGENESIS OF GLN-977</scope>
</reference>
<reference evidence="13" key="6">
    <citation type="journal article" date="2001" name="EMBO J.">
        <title>Two overlapping reading frames in a single exon encode interacting proteins -- a novel way of gene usage.</title>
        <authorList>
            <person name="Klemke M."/>
            <person name="Kehlenbach R.H."/>
            <person name="Huttner W.B."/>
        </authorList>
    </citation>
    <scope>INTERACTION WITH ALEX</scope>
</reference>
<reference evidence="13" key="7">
    <citation type="journal article" date="2004" name="Proc. Natl. Acad. Sci. U.S.A.">
        <title>XL alpha-s, the extra-long form of the alpha subunit of the Gs G protein, is significantly longer than suspected, and so is its companion Alex.</title>
        <authorList>
            <person name="Abramowitz J."/>
            <person name="Grenet D."/>
            <person name="Birnbaumer M."/>
            <person name="Torres H.N."/>
            <person name="Birnbaumer L."/>
        </authorList>
    </citation>
    <scope>IDENTIFICATION</scope>
</reference>
<reference key="8">
    <citation type="journal article" date="2012" name="Nat. Commun.">
        <title>Quantitative maps of protein phosphorylation sites across 14 different rat organs and tissues.</title>
        <authorList>
            <person name="Lundby A."/>
            <person name="Secher A."/>
            <person name="Lage K."/>
            <person name="Nordsborg N.B."/>
            <person name="Dmytriyev A."/>
            <person name="Lundby C."/>
            <person name="Olsen J.V."/>
        </authorList>
    </citation>
    <scope>PHOSPHORYLATION [LARGE SCALE ANALYSIS] AT SER-1102</scope>
    <scope>IDENTIFICATION BY MASS SPECTROMETRY [LARGE SCALE ANALYSIS]</scope>
</reference>